<protein>
    <recommendedName>
        <fullName>Probable rhamnogalacturonate lyase B</fullName>
        <ecNumber>4.2.2.23</ecNumber>
    </recommendedName>
</protein>
<comment type="function">
    <text evidence="1">Pectinolytic enzymes consist of four classes of enzymes: pectin lyase, polygalacturonase, pectin methylesterase and rhamnogalacturonase. Degrades the rhamnogalacturonan I (RG-I) backbone of pectin (By similarity).</text>
</comment>
<comment type="catalytic activity">
    <reaction>
        <text>Endotype eliminative cleavage of L-alpha-rhamnopyranosyl-(1-&gt;4)-alpha-D-galactopyranosyluronic acid bonds of rhamnogalacturonan I domains in ramified hairy regions of pectin leaving L-rhamnopyranose at the reducing end and 4-deoxy-4,5-unsaturated D-galactopyranosyluronic acid at the non-reducing end.</text>
        <dbReference type="EC" id="4.2.2.23"/>
    </reaction>
</comment>
<comment type="subcellular location">
    <subcellularLocation>
        <location evidence="1">Secreted</location>
    </subcellularLocation>
</comment>
<comment type="similarity">
    <text evidence="3">Belongs to the polysaccharide lyase 4 family.</text>
</comment>
<reference key="1">
    <citation type="journal article" date="2008" name="PLoS Genet.">
        <title>Genomic islands in the pathogenic filamentous fungus Aspergillus fumigatus.</title>
        <authorList>
            <person name="Fedorova N.D."/>
            <person name="Khaldi N."/>
            <person name="Joardar V.S."/>
            <person name="Maiti R."/>
            <person name="Amedeo P."/>
            <person name="Anderson M.J."/>
            <person name="Crabtree J."/>
            <person name="Silva J.C."/>
            <person name="Badger J.H."/>
            <person name="Albarraq A."/>
            <person name="Angiuoli S."/>
            <person name="Bussey H."/>
            <person name="Bowyer P."/>
            <person name="Cotty P.J."/>
            <person name="Dyer P.S."/>
            <person name="Egan A."/>
            <person name="Galens K."/>
            <person name="Fraser-Liggett C.M."/>
            <person name="Haas B.J."/>
            <person name="Inman J.M."/>
            <person name="Kent R."/>
            <person name="Lemieux S."/>
            <person name="Malavazi I."/>
            <person name="Orvis J."/>
            <person name="Roemer T."/>
            <person name="Ronning C.M."/>
            <person name="Sundaram J.P."/>
            <person name="Sutton G."/>
            <person name="Turner G."/>
            <person name="Venter J.C."/>
            <person name="White O.R."/>
            <person name="Whitty B.R."/>
            <person name="Youngman P."/>
            <person name="Wolfe K.H."/>
            <person name="Goldman G.H."/>
            <person name="Wortman J.R."/>
            <person name="Jiang B."/>
            <person name="Denning D.W."/>
            <person name="Nierman W.C."/>
        </authorList>
    </citation>
    <scope>NUCLEOTIDE SEQUENCE [LARGE SCALE GENOMIC DNA]</scope>
    <source>
        <strain>CBS 144.89 / FGSC A1163 / CEA10</strain>
    </source>
</reference>
<evidence type="ECO:0000250" key="1"/>
<evidence type="ECO:0000255" key="2"/>
<evidence type="ECO:0000305" key="3"/>
<dbReference type="EC" id="4.2.2.23"/>
<dbReference type="EMBL" id="DS499594">
    <property type="protein sequence ID" value="EDP56940.1"/>
    <property type="molecule type" value="Genomic_DNA"/>
</dbReference>
<dbReference type="SMR" id="B0XPA2"/>
<dbReference type="GlyCosmos" id="B0XPA2">
    <property type="glycosylation" value="8 sites, No reported glycans"/>
</dbReference>
<dbReference type="EnsemblFungi" id="EDP56940">
    <property type="protein sequence ID" value="EDP56940"/>
    <property type="gene ID" value="AFUB_016620"/>
</dbReference>
<dbReference type="VEuPathDB" id="FungiDB:AFUB_016620"/>
<dbReference type="HOGENOM" id="CLU_016624_0_0_1"/>
<dbReference type="OrthoDB" id="23778at5052"/>
<dbReference type="PhylomeDB" id="B0XPA2"/>
<dbReference type="Proteomes" id="UP000001699">
    <property type="component" value="Unassembled WGS sequence"/>
</dbReference>
<dbReference type="GO" id="GO:0005576">
    <property type="term" value="C:extracellular region"/>
    <property type="evidence" value="ECO:0007669"/>
    <property type="project" value="UniProtKB-SubCell"/>
</dbReference>
<dbReference type="GO" id="GO:0030246">
    <property type="term" value="F:carbohydrate binding"/>
    <property type="evidence" value="ECO:0007669"/>
    <property type="project" value="InterPro"/>
</dbReference>
<dbReference type="GO" id="GO:0102210">
    <property type="term" value="F:rhamnogalacturonan endolyase activity"/>
    <property type="evidence" value="ECO:0007669"/>
    <property type="project" value="UniProtKB-EC"/>
</dbReference>
<dbReference type="GO" id="GO:0071555">
    <property type="term" value="P:cell wall organization"/>
    <property type="evidence" value="ECO:0007669"/>
    <property type="project" value="UniProtKB-KW"/>
</dbReference>
<dbReference type="GO" id="GO:0000272">
    <property type="term" value="P:polysaccharide catabolic process"/>
    <property type="evidence" value="ECO:0007669"/>
    <property type="project" value="UniProtKB-KW"/>
</dbReference>
<dbReference type="CDD" id="cd10317">
    <property type="entry name" value="RGL4_C"/>
    <property type="match status" value="1"/>
</dbReference>
<dbReference type="CDD" id="cd10316">
    <property type="entry name" value="RGL4_M"/>
    <property type="match status" value="1"/>
</dbReference>
<dbReference type="CDD" id="cd10320">
    <property type="entry name" value="RGL4_N"/>
    <property type="match status" value="1"/>
</dbReference>
<dbReference type="Gene3D" id="2.70.98.10">
    <property type="match status" value="1"/>
</dbReference>
<dbReference type="Gene3D" id="2.60.40.1120">
    <property type="entry name" value="Carboxypeptidase-like, regulatory domain"/>
    <property type="match status" value="1"/>
</dbReference>
<dbReference type="Gene3D" id="2.60.120.260">
    <property type="entry name" value="Galactose-binding domain-like"/>
    <property type="match status" value="1"/>
</dbReference>
<dbReference type="InterPro" id="IPR013784">
    <property type="entry name" value="Carb-bd-like_fold"/>
</dbReference>
<dbReference type="InterPro" id="IPR011013">
    <property type="entry name" value="Gal_mutarotase_sf_dom"/>
</dbReference>
<dbReference type="InterPro" id="IPR008979">
    <property type="entry name" value="Galactose-bd-like_sf"/>
</dbReference>
<dbReference type="InterPro" id="IPR014718">
    <property type="entry name" value="GH-type_carb-bd"/>
</dbReference>
<dbReference type="InterPro" id="IPR051850">
    <property type="entry name" value="Polysacch_Lyase_4"/>
</dbReference>
<dbReference type="InterPro" id="IPR029413">
    <property type="entry name" value="RG-lyase_II"/>
</dbReference>
<dbReference type="InterPro" id="IPR029411">
    <property type="entry name" value="RG-lyase_III"/>
</dbReference>
<dbReference type="PANTHER" id="PTHR32018:SF9">
    <property type="entry name" value="RHAMNOGALACTURONATE LYASE B"/>
    <property type="match status" value="1"/>
</dbReference>
<dbReference type="PANTHER" id="PTHR32018">
    <property type="entry name" value="RHAMNOGALACTURONATE LYASE FAMILY PROTEIN"/>
    <property type="match status" value="1"/>
</dbReference>
<dbReference type="Pfam" id="PF14683">
    <property type="entry name" value="CBM-like"/>
    <property type="match status" value="1"/>
</dbReference>
<dbReference type="Pfam" id="PF14686">
    <property type="entry name" value="fn3_3"/>
    <property type="match status" value="1"/>
</dbReference>
<dbReference type="SUPFAM" id="SSF74650">
    <property type="entry name" value="Galactose mutarotase-like"/>
    <property type="match status" value="1"/>
</dbReference>
<dbReference type="SUPFAM" id="SSF49785">
    <property type="entry name" value="Galactose-binding domain-like"/>
    <property type="match status" value="1"/>
</dbReference>
<dbReference type="SUPFAM" id="SSF49452">
    <property type="entry name" value="Starch-binding domain-like"/>
    <property type="match status" value="1"/>
</dbReference>
<feature type="signal peptide" evidence="2">
    <location>
        <begin position="1"/>
        <end position="19"/>
    </location>
</feature>
<feature type="chain" id="PRO_0000394373" description="Probable rhamnogalacturonate lyase B">
    <location>
        <begin position="20"/>
        <end position="658"/>
    </location>
</feature>
<feature type="glycosylation site" description="N-linked (GlcNAc...) asparagine" evidence="2">
    <location>
        <position position="110"/>
    </location>
</feature>
<feature type="glycosylation site" description="N-linked (GlcNAc...) asparagine" evidence="2">
    <location>
        <position position="143"/>
    </location>
</feature>
<feature type="glycosylation site" description="N-linked (GlcNAc...) asparagine" evidence="2">
    <location>
        <position position="239"/>
    </location>
</feature>
<feature type="glycosylation site" description="N-linked (GlcNAc...) asparagine" evidence="2">
    <location>
        <position position="280"/>
    </location>
</feature>
<feature type="glycosylation site" description="N-linked (GlcNAc...) asparagine" evidence="2">
    <location>
        <position position="522"/>
    </location>
</feature>
<feature type="glycosylation site" description="N-linked (GlcNAc...) asparagine" evidence="2">
    <location>
        <position position="530"/>
    </location>
</feature>
<feature type="glycosylation site" description="N-linked (GlcNAc...) asparagine" evidence="2">
    <location>
        <position position="592"/>
    </location>
</feature>
<feature type="glycosylation site" description="N-linked (GlcNAc...) asparagine" evidence="2">
    <location>
        <position position="633"/>
    </location>
</feature>
<organism>
    <name type="scientific">Aspergillus fumigatus (strain CBS 144.89 / FGSC A1163 / CEA10)</name>
    <name type="common">Neosartorya fumigata</name>
    <dbReference type="NCBI Taxonomy" id="451804"/>
    <lineage>
        <taxon>Eukaryota</taxon>
        <taxon>Fungi</taxon>
        <taxon>Dikarya</taxon>
        <taxon>Ascomycota</taxon>
        <taxon>Pezizomycotina</taxon>
        <taxon>Eurotiomycetes</taxon>
        <taxon>Eurotiomycetidae</taxon>
        <taxon>Eurotiales</taxon>
        <taxon>Aspergillaceae</taxon>
        <taxon>Aspergillus</taxon>
        <taxon>Aspergillus subgen. Fumigati</taxon>
    </lineage>
</organism>
<proteinExistence type="inferred from homology"/>
<accession>B0XPA2</accession>
<keyword id="KW-0119">Carbohydrate metabolism</keyword>
<keyword id="KW-0961">Cell wall biogenesis/degradation</keyword>
<keyword id="KW-0325">Glycoprotein</keyword>
<keyword id="KW-0456">Lyase</keyword>
<keyword id="KW-0624">Polysaccharide degradation</keyword>
<keyword id="KW-0964">Secreted</keyword>
<keyword id="KW-0732">Signal</keyword>
<sequence>MRFAIPLGAACAWAGVALAALQIAEDFSSITLNNDRFKAVWSKSKGSVVDMFLDGQDLLGPQSGSTGIGPYLDCYCVPSGFYTAGATNPRMQYVEGTDSTGTKYAGVILNDTYTPTGQQFQQYWFLRDGETGLHMFSRLAYYNETTPFLRNLQEFRTLFRPNTQLWTHLTSSELQTAPLPSKNAVSKQVVVQDATWRFNNTPDDAYYTQFSEYFTKYTFSNQWRDNDVHGLYGDGTNSNGSTYGAWLVMNTKGPLHSDLTVDGIVYNYIVSNHHGEGTPNITNGFDRTFGPQFYLFNGGKGSTSSLQDLRSEAAKLADPSWNAEFYDSIAKHVVGYVPSSKRGSVDGRIKLPKGASNPIAILTVDGQYFQDNSVVPSSYQYWTDIDTSGRFRIDRVVEGKYRLTVYADGIFGDFVRDGVTVRAGKTTTVKEKWDAESAGKEIWRLGTPDKSSGEFRHGVARDPTHPLHPPEYLIYWGAYDWQSDFPKGIDYTIGSSDPATDFNTVHWSVFGPTPDNPNVEYNTTHDWKINFSLTKKQLRNSKKATLTIQLAGAKTASGNTDEYKASEPYINLIHESYINDQKEPLSFVIGFNQSSSCIVRSAVSCYQVRSRMEFPADWLKVGENTLTLHLPYNATDTETAILPATVYVQYDALRLELD</sequence>
<gene>
    <name type="primary">rglB</name>
    <name type="ORF">AFUB_016620</name>
</gene>
<name>RGLB_ASPFC</name>